<reference key="1">
    <citation type="journal article" date="2003" name="Proc. Natl. Acad. Sci. U.S.A.">
        <title>The genome sequence of Blochmannia floridanus: comparative analysis of reduced genomes.</title>
        <authorList>
            <person name="Gil R."/>
            <person name="Silva F.J."/>
            <person name="Zientz E."/>
            <person name="Delmotte F."/>
            <person name="Gonzalez-Candelas F."/>
            <person name="Latorre A."/>
            <person name="Rausell C."/>
            <person name="Kamerbeek J."/>
            <person name="Gadau J."/>
            <person name="Hoelldobler B."/>
            <person name="van Ham R.C.H.J."/>
            <person name="Gross R."/>
            <person name="Moya A."/>
        </authorList>
    </citation>
    <scope>NUCLEOTIDE SEQUENCE [LARGE SCALE GENOMIC DNA]</scope>
</reference>
<protein>
    <recommendedName>
        <fullName evidence="1">1-(5-phosphoribosyl)-5-[(5-phosphoribosylamino)methylideneamino] imidazole-4-carboxamide isomerase</fullName>
        <ecNumber evidence="1">5.3.1.16</ecNumber>
    </recommendedName>
    <alternativeName>
        <fullName evidence="1">Phosphoribosylformimino-5-aminoimidazole carboxamide ribotide isomerase</fullName>
    </alternativeName>
</protein>
<proteinExistence type="inferred from homology"/>
<gene>
    <name evidence="1" type="primary">hisA</name>
    <name type="ordered locus">Bfl467</name>
</gene>
<organism>
    <name type="scientific">Blochmanniella floridana</name>
    <dbReference type="NCBI Taxonomy" id="203907"/>
    <lineage>
        <taxon>Bacteria</taxon>
        <taxon>Pseudomonadati</taxon>
        <taxon>Pseudomonadota</taxon>
        <taxon>Gammaproteobacteria</taxon>
        <taxon>Enterobacterales</taxon>
        <taxon>Enterobacteriaceae</taxon>
        <taxon>ant endosymbionts</taxon>
        <taxon>Candidatus Blochmanniella</taxon>
    </lineage>
</organism>
<evidence type="ECO:0000255" key="1">
    <source>
        <dbReference type="HAMAP-Rule" id="MF_01014"/>
    </source>
</evidence>
<accession>Q7VQW6</accession>
<feature type="chain" id="PRO_0000141994" description="1-(5-phosphoribosyl)-5-[(5-phosphoribosylamino)methylideneamino] imidazole-4-carboxamide isomerase">
    <location>
        <begin position="1"/>
        <end position="251"/>
    </location>
</feature>
<feature type="active site" description="Proton acceptor" evidence="1">
    <location>
        <position position="7"/>
    </location>
</feature>
<feature type="active site" description="Proton donor" evidence="1">
    <location>
        <position position="131"/>
    </location>
</feature>
<keyword id="KW-0028">Amino-acid biosynthesis</keyword>
<keyword id="KW-0963">Cytoplasm</keyword>
<keyword id="KW-0368">Histidine biosynthesis</keyword>
<keyword id="KW-0413">Isomerase</keyword>
<keyword id="KW-1185">Reference proteome</keyword>
<comment type="catalytic activity">
    <reaction evidence="1">
        <text>1-(5-phospho-beta-D-ribosyl)-5-[(5-phospho-beta-D-ribosylamino)methylideneamino]imidazole-4-carboxamide = 5-[(5-phospho-1-deoxy-D-ribulos-1-ylimino)methylamino]-1-(5-phospho-beta-D-ribosyl)imidazole-4-carboxamide</text>
        <dbReference type="Rhea" id="RHEA:15469"/>
        <dbReference type="ChEBI" id="CHEBI:58435"/>
        <dbReference type="ChEBI" id="CHEBI:58525"/>
        <dbReference type="EC" id="5.3.1.16"/>
    </reaction>
</comment>
<comment type="pathway">
    <text evidence="1">Amino-acid biosynthesis; L-histidine biosynthesis; L-histidine from 5-phospho-alpha-D-ribose 1-diphosphate: step 4/9.</text>
</comment>
<comment type="subcellular location">
    <subcellularLocation>
        <location evidence="1">Cytoplasm</location>
    </subcellularLocation>
</comment>
<comment type="similarity">
    <text evidence="1">Belongs to the HisA/HisF family.</text>
</comment>
<sequence>MIIPALDIINGDAVRLYQGKYQSQSHYGNPYSILSTYVQQGATMIHLVDLDGARNPKNRQLSLIKELTHTAITSHLKIQIGGGIRHATDIKTLLKFGVNRVILGSIAITHPKKVKQWFTYFNPSSLVLALDIYIDSKNNRKVVIHGWQKETNIQLEEVIENYNSVGLKHVLCTDISKDGTLLGSNINLYQSICYKWPKISFQASGGVAKLTEILQLRSSGVNSIIIGRSFLEKKFTLTEAISCWQNASSRV</sequence>
<dbReference type="EC" id="5.3.1.16" evidence="1"/>
<dbReference type="EMBL" id="BX248583">
    <property type="protein sequence ID" value="CAD83526.1"/>
    <property type="molecule type" value="Genomic_DNA"/>
</dbReference>
<dbReference type="SMR" id="Q7VQW6"/>
<dbReference type="STRING" id="203907.Bfl467"/>
<dbReference type="KEGG" id="bfl:Bfl467"/>
<dbReference type="eggNOG" id="COG0106">
    <property type="taxonomic scope" value="Bacteria"/>
</dbReference>
<dbReference type="HOGENOM" id="CLU_048577_1_2_6"/>
<dbReference type="OrthoDB" id="9807749at2"/>
<dbReference type="UniPathway" id="UPA00031">
    <property type="reaction ID" value="UER00009"/>
</dbReference>
<dbReference type="Proteomes" id="UP000002192">
    <property type="component" value="Chromosome"/>
</dbReference>
<dbReference type="GO" id="GO:0005737">
    <property type="term" value="C:cytoplasm"/>
    <property type="evidence" value="ECO:0007669"/>
    <property type="project" value="UniProtKB-SubCell"/>
</dbReference>
<dbReference type="GO" id="GO:0003949">
    <property type="term" value="F:1-(5-phosphoribosyl)-5-[(5-phosphoribosylamino)methylideneamino]imidazole-4-carboxamide isomerase activity"/>
    <property type="evidence" value="ECO:0007669"/>
    <property type="project" value="UniProtKB-UniRule"/>
</dbReference>
<dbReference type="GO" id="GO:0000105">
    <property type="term" value="P:L-histidine biosynthetic process"/>
    <property type="evidence" value="ECO:0007669"/>
    <property type="project" value="UniProtKB-UniRule"/>
</dbReference>
<dbReference type="GO" id="GO:0000162">
    <property type="term" value="P:L-tryptophan biosynthetic process"/>
    <property type="evidence" value="ECO:0007669"/>
    <property type="project" value="TreeGrafter"/>
</dbReference>
<dbReference type="CDD" id="cd04732">
    <property type="entry name" value="HisA"/>
    <property type="match status" value="1"/>
</dbReference>
<dbReference type="FunFam" id="3.20.20.70:FF:000009">
    <property type="entry name" value="1-(5-phosphoribosyl)-5-[(5-phosphoribosylamino)methylideneamino] imidazole-4-carboxamide isomerase"/>
    <property type="match status" value="1"/>
</dbReference>
<dbReference type="Gene3D" id="3.20.20.70">
    <property type="entry name" value="Aldolase class I"/>
    <property type="match status" value="1"/>
</dbReference>
<dbReference type="HAMAP" id="MF_01014">
    <property type="entry name" value="HisA"/>
    <property type="match status" value="1"/>
</dbReference>
<dbReference type="InterPro" id="IPR013785">
    <property type="entry name" value="Aldolase_TIM"/>
</dbReference>
<dbReference type="InterPro" id="IPR006062">
    <property type="entry name" value="His_biosynth"/>
</dbReference>
<dbReference type="InterPro" id="IPR006063">
    <property type="entry name" value="HisA_bact_arch"/>
</dbReference>
<dbReference type="InterPro" id="IPR044524">
    <property type="entry name" value="Isoase_HisA-like"/>
</dbReference>
<dbReference type="InterPro" id="IPR023016">
    <property type="entry name" value="Isoase_HisA-like_bact"/>
</dbReference>
<dbReference type="InterPro" id="IPR011060">
    <property type="entry name" value="RibuloseP-bd_barrel"/>
</dbReference>
<dbReference type="NCBIfam" id="TIGR00007">
    <property type="entry name" value="1-(5-phosphoribosyl)-5-[(5-phosphoribosylamino)methylideneamino]imidazole-4-carboxamide isomerase"/>
    <property type="match status" value="1"/>
</dbReference>
<dbReference type="PANTHER" id="PTHR43090">
    <property type="entry name" value="1-(5-PHOSPHORIBOSYL)-5-[(5-PHOSPHORIBOSYLAMINO)METHYLIDENEAMINO] IMIDAZOLE-4-CARBOXAMIDE ISOMERASE"/>
    <property type="match status" value="1"/>
</dbReference>
<dbReference type="PANTHER" id="PTHR43090:SF2">
    <property type="entry name" value="1-(5-PHOSPHORIBOSYL)-5-[(5-PHOSPHORIBOSYLAMINO)METHYLIDENEAMINO] IMIDAZOLE-4-CARBOXAMIDE ISOMERASE"/>
    <property type="match status" value="1"/>
</dbReference>
<dbReference type="Pfam" id="PF00977">
    <property type="entry name" value="His_biosynth"/>
    <property type="match status" value="1"/>
</dbReference>
<dbReference type="SUPFAM" id="SSF51366">
    <property type="entry name" value="Ribulose-phoshate binding barrel"/>
    <property type="match status" value="1"/>
</dbReference>
<name>HIS4_BLOFL</name>